<reference key="1">
    <citation type="journal article" date="2002" name="J. Bacteriol.">
        <title>Whole-genome comparison of Mycobacterium tuberculosis clinical and laboratory strains.</title>
        <authorList>
            <person name="Fleischmann R.D."/>
            <person name="Alland D."/>
            <person name="Eisen J.A."/>
            <person name="Carpenter L."/>
            <person name="White O."/>
            <person name="Peterson J.D."/>
            <person name="DeBoy R.T."/>
            <person name="Dodson R.J."/>
            <person name="Gwinn M.L."/>
            <person name="Haft D.H."/>
            <person name="Hickey E.K."/>
            <person name="Kolonay J.F."/>
            <person name="Nelson W.C."/>
            <person name="Umayam L.A."/>
            <person name="Ermolaeva M.D."/>
            <person name="Salzberg S.L."/>
            <person name="Delcher A."/>
            <person name="Utterback T.R."/>
            <person name="Weidman J.F."/>
            <person name="Khouri H.M."/>
            <person name="Gill J."/>
            <person name="Mikula A."/>
            <person name="Bishai W."/>
            <person name="Jacobs W.R. Jr."/>
            <person name="Venter J.C."/>
            <person name="Fraser C.M."/>
        </authorList>
    </citation>
    <scope>NUCLEOTIDE SEQUENCE [LARGE SCALE GENOMIC DNA]</scope>
    <source>
        <strain>CDC 1551 / Oshkosh</strain>
    </source>
</reference>
<evidence type="ECO:0000250" key="1">
    <source>
        <dbReference type="UniProtKB" id="P00163"/>
    </source>
</evidence>
<evidence type="ECO:0000250" key="2">
    <source>
        <dbReference type="UniProtKB" id="P9WP37"/>
    </source>
</evidence>
<evidence type="ECO:0000255" key="3"/>
<evidence type="ECO:0000255" key="4">
    <source>
        <dbReference type="PROSITE-ProRule" id="PRU00968"/>
    </source>
</evidence>
<accession>P9WP36</accession>
<accession>L0TAG7</accession>
<accession>P63885</accession>
<accession>Q10388</accession>
<proteinExistence type="inferred from homology"/>
<protein>
    <recommendedName>
        <fullName>Cytochrome bc1 complex cytochrome b subunit</fullName>
        <ecNumber evidence="2">7.1.1.8</ecNumber>
    </recommendedName>
    <alternativeName>
        <fullName>Cytochrome bc1 reductase complex subunit QcrB</fullName>
    </alternativeName>
    <alternativeName>
        <fullName>Ubiquinol--cytochrome c reductase cytochrome b subunit</fullName>
    </alternativeName>
</protein>
<comment type="function">
    <text evidence="2">Cytochrome b subunit of the cytochrome bc1 complex, an essential component of the respiratory electron transport chain required for ATP synthesis. The bc1 complex catalyzes the oxidation of ubiquinol and the reduction of cytochrome c in the respiratory chain. The bc1 complex operates through a Q-cycle mechanism that couples electron transfer to generation of the proton gradient that drives ATP synthesis. The cytochrome b subunit contains two ubiquinol reactive sites: the oxidation (QP) site and the reduction (QN) site.</text>
</comment>
<comment type="catalytic activity">
    <reaction evidence="2">
        <text>a quinol + 2 Fe(III)-[cytochrome c](out) = a quinone + 2 Fe(II)-[cytochrome c](out) + 2 H(+)(out)</text>
        <dbReference type="Rhea" id="RHEA:11484"/>
        <dbReference type="Rhea" id="RHEA-COMP:10350"/>
        <dbReference type="Rhea" id="RHEA-COMP:14399"/>
        <dbReference type="ChEBI" id="CHEBI:15378"/>
        <dbReference type="ChEBI" id="CHEBI:24646"/>
        <dbReference type="ChEBI" id="CHEBI:29033"/>
        <dbReference type="ChEBI" id="CHEBI:29034"/>
        <dbReference type="ChEBI" id="CHEBI:132124"/>
        <dbReference type="EC" id="7.1.1.8"/>
    </reaction>
</comment>
<comment type="cofactor">
    <cofactor evidence="1">
        <name>heme</name>
        <dbReference type="ChEBI" id="CHEBI:30413"/>
    </cofactor>
    <text evidence="1">Binds 2 heme groups non-covalently per subunit.</text>
</comment>
<comment type="subunit">
    <text evidence="2">The cytochrome bc1 complex is composed of a cytochrome b (QcrB), the Rieske iron-sulfur protein (QcrA) and a diheme cytochrome c (QcrC) subunit.</text>
</comment>
<comment type="subcellular location">
    <subcellularLocation>
        <location evidence="3">Cell membrane</location>
        <topology evidence="3">Multi-pass membrane protein</topology>
    </subcellularLocation>
</comment>
<comment type="similarity">
    <text evidence="4">Belongs to the cytochrome b family.</text>
</comment>
<sequence>MSPKLSPPNIGEVLARQAEDIDTRYHPSAALRRQLNKVFPTHWSFLLGEIALYSFVVLLITGVYLTLFFDPSMVDVTYNGVYQPLRGVEMSRAYQSALDISFEVRGGLFVRQIHHWAALMFAAAIMVHLARIFFTGAFRRPRETNWVIGSLLLILAMFEGYFGYSLPDDLLSGLGLRAALSSITLGMPVIGTWLHWALFGGDFPGTILIPRLYALHILLLPGIILALIGLHLALVWFQKHTQFPGPGRTEHNVVGVRVMPVFAFKSGAFFAAIVGVLGLMGGLLQINPIWNLGPYKPSQVSAGSQPDFYMMWTEGLARIWPPWEFYFWHHTIPAPVWVAVIMGLVFVLLPAYPFLEKRFTGDYAHHNLLQRPRDVPVRTAIGAMAIAFYMVLTLAAMNDIIALKFHISLNATTWIGRIGMVILPPFVYFITYRWCIGLQRSDRSVLEHGVETGIIKRLPHGAYIELHQPLGPVDEHGHPIPLQYQGAPLPKRMNKLGSAGSPGSGSFLFADSAAEDAALREAGHAAEQRALAALREHQDSIMGSPDGEH</sequence>
<feature type="chain" id="PRO_0000427020" description="Cytochrome bc1 complex cytochrome b subunit">
    <location>
        <begin position="1"/>
        <end position="549"/>
    </location>
</feature>
<feature type="transmembrane region" description="Helical" evidence="4">
    <location>
        <begin position="45"/>
        <end position="65"/>
    </location>
</feature>
<feature type="transmembrane region" description="Helical" evidence="4">
    <location>
        <begin position="118"/>
        <end position="138"/>
    </location>
</feature>
<feature type="transmembrane region" description="Helical" evidence="4">
    <location>
        <begin position="146"/>
        <end position="166"/>
    </location>
</feature>
<feature type="transmembrane region" description="Helical" evidence="4">
    <location>
        <begin position="189"/>
        <end position="209"/>
    </location>
</feature>
<feature type="transmembrane region" description="Helical" evidence="4">
    <location>
        <begin position="217"/>
        <end position="237"/>
    </location>
</feature>
<feature type="transmembrane region" description="Helical" evidence="4">
    <location>
        <begin position="266"/>
        <end position="286"/>
    </location>
</feature>
<feature type="transmembrane region" description="Helical" evidence="4">
    <location>
        <begin position="335"/>
        <end position="355"/>
    </location>
</feature>
<feature type="transmembrane region" description="Helical" evidence="4">
    <location>
        <begin position="381"/>
        <end position="401"/>
    </location>
</feature>
<feature type="transmembrane region" description="Helical" evidence="4">
    <location>
        <begin position="418"/>
        <end position="438"/>
    </location>
</feature>
<feature type="binding site" description="axial binding residue" evidence="4">
    <location>
        <position position="114"/>
    </location>
    <ligand>
        <name>heme</name>
        <dbReference type="ChEBI" id="CHEBI:30413"/>
        <label>1</label>
    </ligand>
    <ligandPart>
        <name>Fe</name>
        <dbReference type="ChEBI" id="CHEBI:18248"/>
    </ligandPart>
</feature>
<feature type="binding site" description="axial binding residue" evidence="4">
    <location>
        <position position="128"/>
    </location>
    <ligand>
        <name>heme</name>
        <dbReference type="ChEBI" id="CHEBI:30413"/>
        <label>2</label>
    </ligand>
    <ligandPart>
        <name>Fe</name>
        <dbReference type="ChEBI" id="CHEBI:18248"/>
    </ligandPart>
</feature>
<feature type="binding site" description="axial binding residue" evidence="4">
    <location>
        <position position="216"/>
    </location>
    <ligand>
        <name>heme</name>
        <dbReference type="ChEBI" id="CHEBI:30413"/>
        <label>1</label>
    </ligand>
    <ligandPart>
        <name>Fe</name>
        <dbReference type="ChEBI" id="CHEBI:18248"/>
    </ligandPart>
</feature>
<feature type="binding site" description="axial binding residue" evidence="4">
    <location>
        <position position="231"/>
    </location>
    <ligand>
        <name>heme</name>
        <dbReference type="ChEBI" id="CHEBI:30413"/>
        <label>2</label>
    </ligand>
    <ligandPart>
        <name>Fe</name>
        <dbReference type="ChEBI" id="CHEBI:18248"/>
    </ligandPart>
</feature>
<keyword id="KW-1003">Cell membrane</keyword>
<keyword id="KW-0249">Electron transport</keyword>
<keyword id="KW-0349">Heme</keyword>
<keyword id="KW-0408">Iron</keyword>
<keyword id="KW-0472">Membrane</keyword>
<keyword id="KW-0479">Metal-binding</keyword>
<keyword id="KW-1185">Reference proteome</keyword>
<keyword id="KW-0679">Respiratory chain</keyword>
<keyword id="KW-1278">Translocase</keyword>
<keyword id="KW-0812">Transmembrane</keyword>
<keyword id="KW-1133">Transmembrane helix</keyword>
<keyword id="KW-0813">Transport</keyword>
<organism>
    <name type="scientific">Mycobacterium tuberculosis (strain CDC 1551 / Oshkosh)</name>
    <dbReference type="NCBI Taxonomy" id="83331"/>
    <lineage>
        <taxon>Bacteria</taxon>
        <taxon>Bacillati</taxon>
        <taxon>Actinomycetota</taxon>
        <taxon>Actinomycetes</taxon>
        <taxon>Mycobacteriales</taxon>
        <taxon>Mycobacteriaceae</taxon>
        <taxon>Mycobacterium</taxon>
        <taxon>Mycobacterium tuberculosis complex</taxon>
    </lineage>
</organism>
<gene>
    <name type="primary">qcrB</name>
    <name type="ordered locus">MT2252</name>
</gene>
<name>QCRB_MYCTO</name>
<dbReference type="EC" id="7.1.1.8" evidence="2"/>
<dbReference type="EMBL" id="AE000516">
    <property type="protein sequence ID" value="AAK46538.1"/>
    <property type="molecule type" value="Genomic_DNA"/>
</dbReference>
<dbReference type="PIR" id="E70784">
    <property type="entry name" value="E70784"/>
</dbReference>
<dbReference type="RefSeq" id="WP_003899212.1">
    <property type="nucleotide sequence ID" value="NZ_KK341227.1"/>
</dbReference>
<dbReference type="SMR" id="P9WP36"/>
<dbReference type="KEGG" id="mtc:MT2252"/>
<dbReference type="PATRIC" id="fig|83331.31.peg.2427"/>
<dbReference type="HOGENOM" id="CLU_031114_2_0_11"/>
<dbReference type="Proteomes" id="UP000001020">
    <property type="component" value="Chromosome"/>
</dbReference>
<dbReference type="GO" id="GO:0005886">
    <property type="term" value="C:plasma membrane"/>
    <property type="evidence" value="ECO:0007669"/>
    <property type="project" value="UniProtKB-SubCell"/>
</dbReference>
<dbReference type="GO" id="GO:0046872">
    <property type="term" value="F:metal ion binding"/>
    <property type="evidence" value="ECO:0007669"/>
    <property type="project" value="UniProtKB-KW"/>
</dbReference>
<dbReference type="GO" id="GO:0008121">
    <property type="term" value="F:ubiquinol-cytochrome-c reductase activity"/>
    <property type="evidence" value="ECO:0007669"/>
    <property type="project" value="UniProtKB-EC"/>
</dbReference>
<dbReference type="GO" id="GO:0022904">
    <property type="term" value="P:respiratory electron transport chain"/>
    <property type="evidence" value="ECO:0007669"/>
    <property type="project" value="InterPro"/>
</dbReference>
<dbReference type="FunFam" id="1.20.810.10:FF:000007">
    <property type="entry name" value="Ubiquinol-cytochrome C reductase B subunit"/>
    <property type="match status" value="1"/>
</dbReference>
<dbReference type="Gene3D" id="1.20.810.10">
    <property type="entry name" value="Cytochrome Bc1 Complex, Chain C"/>
    <property type="match status" value="1"/>
</dbReference>
<dbReference type="InterPro" id="IPR005797">
    <property type="entry name" value="Cyt_b/b6_N"/>
</dbReference>
<dbReference type="InterPro" id="IPR027387">
    <property type="entry name" value="Cytb/b6-like_sf"/>
</dbReference>
<dbReference type="InterPro" id="IPR016174">
    <property type="entry name" value="Di-haem_cyt_TM"/>
</dbReference>
<dbReference type="PANTHER" id="PTHR19271">
    <property type="entry name" value="CYTOCHROME B"/>
    <property type="match status" value="1"/>
</dbReference>
<dbReference type="PANTHER" id="PTHR19271:SF16">
    <property type="entry name" value="CYTOCHROME B"/>
    <property type="match status" value="1"/>
</dbReference>
<dbReference type="Pfam" id="PF13631">
    <property type="entry name" value="Cytochrom_B_N_2"/>
    <property type="match status" value="1"/>
</dbReference>
<dbReference type="SUPFAM" id="SSF81342">
    <property type="entry name" value="Transmembrane di-heme cytochromes"/>
    <property type="match status" value="1"/>
</dbReference>
<dbReference type="PROSITE" id="PS51002">
    <property type="entry name" value="CYTB_NTER"/>
    <property type="match status" value="1"/>
</dbReference>